<evidence type="ECO:0000255" key="1">
    <source>
        <dbReference type="HAMAP-Rule" id="MF_00042"/>
    </source>
</evidence>
<evidence type="ECO:0000255" key="2">
    <source>
        <dbReference type="PROSITE-ProRule" id="PRU00408"/>
    </source>
</evidence>
<accession>A7ZWF6</accession>
<gene>
    <name evidence="1" type="primary">rnhA</name>
    <name type="ordered locus">EcHS_A0219</name>
</gene>
<proteinExistence type="inferred from homology"/>
<dbReference type="EC" id="3.1.26.4" evidence="1"/>
<dbReference type="EMBL" id="CP000802">
    <property type="protein sequence ID" value="ABV04610.1"/>
    <property type="molecule type" value="Genomic_DNA"/>
</dbReference>
<dbReference type="RefSeq" id="WP_000917888.1">
    <property type="nucleotide sequence ID" value="NC_009800.1"/>
</dbReference>
<dbReference type="BMRB" id="A7ZWF6"/>
<dbReference type="SMR" id="A7ZWF6"/>
<dbReference type="KEGG" id="ecx:EcHS_A0219"/>
<dbReference type="HOGENOM" id="CLU_030894_6_0_6"/>
<dbReference type="GO" id="GO:0005737">
    <property type="term" value="C:cytoplasm"/>
    <property type="evidence" value="ECO:0007669"/>
    <property type="project" value="UniProtKB-SubCell"/>
</dbReference>
<dbReference type="GO" id="GO:0000287">
    <property type="term" value="F:magnesium ion binding"/>
    <property type="evidence" value="ECO:0007669"/>
    <property type="project" value="UniProtKB-UniRule"/>
</dbReference>
<dbReference type="GO" id="GO:0003676">
    <property type="term" value="F:nucleic acid binding"/>
    <property type="evidence" value="ECO:0007669"/>
    <property type="project" value="InterPro"/>
</dbReference>
<dbReference type="GO" id="GO:0004523">
    <property type="term" value="F:RNA-DNA hybrid ribonuclease activity"/>
    <property type="evidence" value="ECO:0007669"/>
    <property type="project" value="UniProtKB-UniRule"/>
</dbReference>
<dbReference type="GO" id="GO:0043137">
    <property type="term" value="P:DNA replication, removal of RNA primer"/>
    <property type="evidence" value="ECO:0007669"/>
    <property type="project" value="TreeGrafter"/>
</dbReference>
<dbReference type="CDD" id="cd09278">
    <property type="entry name" value="RNase_HI_prokaryote_like"/>
    <property type="match status" value="1"/>
</dbReference>
<dbReference type="FunFam" id="3.30.420.10:FF:000008">
    <property type="entry name" value="Ribonuclease H"/>
    <property type="match status" value="1"/>
</dbReference>
<dbReference type="Gene3D" id="3.30.420.10">
    <property type="entry name" value="Ribonuclease H-like superfamily/Ribonuclease H"/>
    <property type="match status" value="1"/>
</dbReference>
<dbReference type="HAMAP" id="MF_00042">
    <property type="entry name" value="RNase_H"/>
    <property type="match status" value="1"/>
</dbReference>
<dbReference type="InterPro" id="IPR050092">
    <property type="entry name" value="RNase_H"/>
</dbReference>
<dbReference type="InterPro" id="IPR012337">
    <property type="entry name" value="RNaseH-like_sf"/>
</dbReference>
<dbReference type="InterPro" id="IPR002156">
    <property type="entry name" value="RNaseH_domain"/>
</dbReference>
<dbReference type="InterPro" id="IPR036397">
    <property type="entry name" value="RNaseH_sf"/>
</dbReference>
<dbReference type="InterPro" id="IPR022892">
    <property type="entry name" value="RNaseHI"/>
</dbReference>
<dbReference type="NCBIfam" id="NF001236">
    <property type="entry name" value="PRK00203.1"/>
    <property type="match status" value="1"/>
</dbReference>
<dbReference type="PANTHER" id="PTHR10642">
    <property type="entry name" value="RIBONUCLEASE H1"/>
    <property type="match status" value="1"/>
</dbReference>
<dbReference type="PANTHER" id="PTHR10642:SF26">
    <property type="entry name" value="RIBONUCLEASE H1"/>
    <property type="match status" value="1"/>
</dbReference>
<dbReference type="Pfam" id="PF00075">
    <property type="entry name" value="RNase_H"/>
    <property type="match status" value="1"/>
</dbReference>
<dbReference type="SUPFAM" id="SSF53098">
    <property type="entry name" value="Ribonuclease H-like"/>
    <property type="match status" value="1"/>
</dbReference>
<dbReference type="PROSITE" id="PS50879">
    <property type="entry name" value="RNASE_H_1"/>
    <property type="match status" value="1"/>
</dbReference>
<protein>
    <recommendedName>
        <fullName evidence="1">Ribonuclease H</fullName>
        <shortName evidence="1">RNase H</shortName>
        <ecNumber evidence="1">3.1.26.4</ecNumber>
    </recommendedName>
</protein>
<comment type="function">
    <text evidence="1">Endonuclease that specifically degrades the RNA of RNA-DNA hybrids.</text>
</comment>
<comment type="catalytic activity">
    <reaction evidence="1">
        <text>Endonucleolytic cleavage to 5'-phosphomonoester.</text>
        <dbReference type="EC" id="3.1.26.4"/>
    </reaction>
</comment>
<comment type="cofactor">
    <cofactor evidence="1">
        <name>Mg(2+)</name>
        <dbReference type="ChEBI" id="CHEBI:18420"/>
    </cofactor>
    <text evidence="1">Binds 1 Mg(2+) ion per subunit. May bind a second metal ion at a regulatory site, or after substrate binding.</text>
</comment>
<comment type="subunit">
    <text evidence="1">Monomer.</text>
</comment>
<comment type="subcellular location">
    <subcellularLocation>
        <location evidence="1">Cytoplasm</location>
    </subcellularLocation>
</comment>
<comment type="similarity">
    <text evidence="1">Belongs to the RNase H family.</text>
</comment>
<name>RNH_ECOHS</name>
<reference key="1">
    <citation type="journal article" date="2008" name="J. Bacteriol.">
        <title>The pangenome structure of Escherichia coli: comparative genomic analysis of E. coli commensal and pathogenic isolates.</title>
        <authorList>
            <person name="Rasko D.A."/>
            <person name="Rosovitz M.J."/>
            <person name="Myers G.S.A."/>
            <person name="Mongodin E.F."/>
            <person name="Fricke W.F."/>
            <person name="Gajer P."/>
            <person name="Crabtree J."/>
            <person name="Sebaihia M."/>
            <person name="Thomson N.R."/>
            <person name="Chaudhuri R."/>
            <person name="Henderson I.R."/>
            <person name="Sperandio V."/>
            <person name="Ravel J."/>
        </authorList>
    </citation>
    <scope>NUCLEOTIDE SEQUENCE [LARGE SCALE GENOMIC DNA]</scope>
    <source>
        <strain>HS</strain>
    </source>
</reference>
<feature type="chain" id="PRO_1000074641" description="Ribonuclease H">
    <location>
        <begin position="1"/>
        <end position="155"/>
    </location>
</feature>
<feature type="domain" description="RNase H type-1" evidence="2">
    <location>
        <begin position="1"/>
        <end position="142"/>
    </location>
</feature>
<feature type="binding site" evidence="1">
    <location>
        <position position="10"/>
    </location>
    <ligand>
        <name>Mg(2+)</name>
        <dbReference type="ChEBI" id="CHEBI:18420"/>
        <label>1</label>
    </ligand>
</feature>
<feature type="binding site" evidence="1">
    <location>
        <position position="10"/>
    </location>
    <ligand>
        <name>Mg(2+)</name>
        <dbReference type="ChEBI" id="CHEBI:18420"/>
        <label>2</label>
    </ligand>
</feature>
<feature type="binding site" evidence="1">
    <location>
        <position position="48"/>
    </location>
    <ligand>
        <name>Mg(2+)</name>
        <dbReference type="ChEBI" id="CHEBI:18420"/>
        <label>1</label>
    </ligand>
</feature>
<feature type="binding site" evidence="1">
    <location>
        <position position="70"/>
    </location>
    <ligand>
        <name>Mg(2+)</name>
        <dbReference type="ChEBI" id="CHEBI:18420"/>
        <label>1</label>
    </ligand>
</feature>
<feature type="binding site" evidence="1">
    <location>
        <position position="134"/>
    </location>
    <ligand>
        <name>Mg(2+)</name>
        <dbReference type="ChEBI" id="CHEBI:18420"/>
        <label>2</label>
    </ligand>
</feature>
<keyword id="KW-0963">Cytoplasm</keyword>
<keyword id="KW-0255">Endonuclease</keyword>
<keyword id="KW-0378">Hydrolase</keyword>
<keyword id="KW-0460">Magnesium</keyword>
<keyword id="KW-0479">Metal-binding</keyword>
<keyword id="KW-0540">Nuclease</keyword>
<organism>
    <name type="scientific">Escherichia coli O9:H4 (strain HS)</name>
    <dbReference type="NCBI Taxonomy" id="331112"/>
    <lineage>
        <taxon>Bacteria</taxon>
        <taxon>Pseudomonadati</taxon>
        <taxon>Pseudomonadota</taxon>
        <taxon>Gammaproteobacteria</taxon>
        <taxon>Enterobacterales</taxon>
        <taxon>Enterobacteriaceae</taxon>
        <taxon>Escherichia</taxon>
    </lineage>
</organism>
<sequence length="155" mass="17570">MLKQVEIFTDGSCLGNPGPGGYGAILRYRGREKTFSAGYTRTTNNRMELMAAIVALEALKEHCEVILSTDSQYVRQGITQWIHSWKKRGWKTADKKPVKNVDLWQRLDAALGQHQIKWEWVKGHAGHPENERCDELARAAAMNPTLEDTGYQVEV</sequence>